<keyword id="KW-0067">ATP-binding</keyword>
<keyword id="KW-0997">Cell inner membrane</keyword>
<keyword id="KW-1003">Cell membrane</keyword>
<keyword id="KW-0963">Cytoplasm</keyword>
<keyword id="KW-0472">Membrane</keyword>
<keyword id="KW-0547">Nucleotide-binding</keyword>
<keyword id="KW-0653">Protein transport</keyword>
<keyword id="KW-1185">Reference proteome</keyword>
<keyword id="KW-1278">Translocase</keyword>
<keyword id="KW-0811">Translocation</keyword>
<keyword id="KW-0813">Transport</keyword>
<feature type="chain" id="PRO_1000145071" description="Protein translocase subunit SecA">
    <location>
        <begin position="1"/>
        <end position="856"/>
    </location>
</feature>
<feature type="binding site" evidence="1">
    <location>
        <position position="77"/>
    </location>
    <ligand>
        <name>ATP</name>
        <dbReference type="ChEBI" id="CHEBI:30616"/>
    </ligand>
</feature>
<feature type="binding site" evidence="1">
    <location>
        <begin position="95"/>
        <end position="99"/>
    </location>
    <ligand>
        <name>ATP</name>
        <dbReference type="ChEBI" id="CHEBI:30616"/>
    </ligand>
</feature>
<feature type="binding site" evidence="1">
    <location>
        <position position="534"/>
    </location>
    <ligand>
        <name>ATP</name>
        <dbReference type="ChEBI" id="CHEBI:30616"/>
    </ligand>
</feature>
<gene>
    <name evidence="1" type="primary">secA</name>
    <name type="ordered locus">THA_1422</name>
</gene>
<reference key="1">
    <citation type="journal article" date="2009" name="J. Bacteriol.">
        <title>The genome of Thermosipho africanus TCF52B: lateral genetic connections to the Firmicutes and Archaea.</title>
        <authorList>
            <person name="Nesboe C.L."/>
            <person name="Bapteste E."/>
            <person name="Curtis B."/>
            <person name="Dahle H."/>
            <person name="Lopez P."/>
            <person name="Macleod D."/>
            <person name="Dlutek M."/>
            <person name="Bowman S."/>
            <person name="Zhaxybayeva O."/>
            <person name="Birkeland N.-K."/>
            <person name="Doolittle W.F."/>
        </authorList>
    </citation>
    <scope>NUCLEOTIDE SEQUENCE [LARGE SCALE GENOMIC DNA]</scope>
    <source>
        <strain>TCF52B</strain>
    </source>
</reference>
<comment type="function">
    <text evidence="1">Part of the Sec protein translocase complex. Interacts with the SecYEG preprotein conducting channel. Has a central role in coupling the hydrolysis of ATP to the transfer of proteins into and across the cell membrane, serving as an ATP-driven molecular motor driving the stepwise translocation of polypeptide chains across the membrane.</text>
</comment>
<comment type="catalytic activity">
    <reaction evidence="1">
        <text>ATP + H2O + cellular proteinSide 1 = ADP + phosphate + cellular proteinSide 2.</text>
        <dbReference type="EC" id="7.4.2.8"/>
    </reaction>
</comment>
<comment type="subunit">
    <text evidence="1">Monomer and homodimer. Part of the essential Sec protein translocation apparatus which comprises SecA, SecYEG and auxiliary proteins SecDF. Other proteins may also be involved.</text>
</comment>
<comment type="subcellular location">
    <subcellularLocation>
        <location evidence="1">Cell inner membrane</location>
        <topology evidence="1">Peripheral membrane protein</topology>
        <orientation evidence="1">Cytoplasmic side</orientation>
    </subcellularLocation>
    <subcellularLocation>
        <location evidence="1">Cytoplasm</location>
    </subcellularLocation>
    <text evidence="1">Distribution is 50-50.</text>
</comment>
<comment type="similarity">
    <text evidence="1">Belongs to the SecA family.</text>
</comment>
<protein>
    <recommendedName>
        <fullName evidence="1">Protein translocase subunit SecA</fullName>
        <ecNumber evidence="1">7.4.2.8</ecNumber>
    </recommendedName>
</protein>
<organism>
    <name type="scientific">Thermosipho africanus (strain TCF52B)</name>
    <dbReference type="NCBI Taxonomy" id="484019"/>
    <lineage>
        <taxon>Bacteria</taxon>
        <taxon>Thermotogati</taxon>
        <taxon>Thermotogota</taxon>
        <taxon>Thermotogae</taxon>
        <taxon>Thermotogales</taxon>
        <taxon>Fervidobacteriaceae</taxon>
        <taxon>Thermosipho</taxon>
    </lineage>
</organism>
<accession>B7ICY9</accession>
<proteinExistence type="inferred from homology"/>
<evidence type="ECO:0000255" key="1">
    <source>
        <dbReference type="HAMAP-Rule" id="MF_01382"/>
    </source>
</evidence>
<dbReference type="EC" id="7.4.2.8" evidence="1"/>
<dbReference type="EMBL" id="CP001185">
    <property type="protein sequence ID" value="ACJ75866.1"/>
    <property type="molecule type" value="Genomic_DNA"/>
</dbReference>
<dbReference type="RefSeq" id="WP_012580218.1">
    <property type="nucleotide sequence ID" value="NC_011653.1"/>
</dbReference>
<dbReference type="SMR" id="B7ICY9"/>
<dbReference type="STRING" id="484019.THA_1422"/>
<dbReference type="KEGG" id="taf:THA_1422"/>
<dbReference type="eggNOG" id="COG0653">
    <property type="taxonomic scope" value="Bacteria"/>
</dbReference>
<dbReference type="HOGENOM" id="CLU_005314_3_0_0"/>
<dbReference type="OrthoDB" id="9805579at2"/>
<dbReference type="Proteomes" id="UP000002453">
    <property type="component" value="Chromosome"/>
</dbReference>
<dbReference type="GO" id="GO:0031522">
    <property type="term" value="C:cell envelope Sec protein transport complex"/>
    <property type="evidence" value="ECO:0007669"/>
    <property type="project" value="TreeGrafter"/>
</dbReference>
<dbReference type="GO" id="GO:0005829">
    <property type="term" value="C:cytosol"/>
    <property type="evidence" value="ECO:0007669"/>
    <property type="project" value="TreeGrafter"/>
</dbReference>
<dbReference type="GO" id="GO:0005886">
    <property type="term" value="C:plasma membrane"/>
    <property type="evidence" value="ECO:0007669"/>
    <property type="project" value="UniProtKB-SubCell"/>
</dbReference>
<dbReference type="GO" id="GO:0005524">
    <property type="term" value="F:ATP binding"/>
    <property type="evidence" value="ECO:0007669"/>
    <property type="project" value="UniProtKB-UniRule"/>
</dbReference>
<dbReference type="GO" id="GO:0008564">
    <property type="term" value="F:protein-exporting ATPase activity"/>
    <property type="evidence" value="ECO:0007669"/>
    <property type="project" value="UniProtKB-EC"/>
</dbReference>
<dbReference type="GO" id="GO:0065002">
    <property type="term" value="P:intracellular protein transmembrane transport"/>
    <property type="evidence" value="ECO:0007669"/>
    <property type="project" value="UniProtKB-UniRule"/>
</dbReference>
<dbReference type="GO" id="GO:0017038">
    <property type="term" value="P:protein import"/>
    <property type="evidence" value="ECO:0007669"/>
    <property type="project" value="InterPro"/>
</dbReference>
<dbReference type="GO" id="GO:0006605">
    <property type="term" value="P:protein targeting"/>
    <property type="evidence" value="ECO:0007669"/>
    <property type="project" value="UniProtKB-UniRule"/>
</dbReference>
<dbReference type="GO" id="GO:0043952">
    <property type="term" value="P:protein transport by the Sec complex"/>
    <property type="evidence" value="ECO:0007669"/>
    <property type="project" value="TreeGrafter"/>
</dbReference>
<dbReference type="CDD" id="cd17928">
    <property type="entry name" value="DEXDc_SecA"/>
    <property type="match status" value="1"/>
</dbReference>
<dbReference type="CDD" id="cd18803">
    <property type="entry name" value="SF2_C_secA"/>
    <property type="match status" value="1"/>
</dbReference>
<dbReference type="FunFam" id="3.90.1440.10:FF:000003">
    <property type="entry name" value="Preprotein translocase SecA subunit"/>
    <property type="match status" value="1"/>
</dbReference>
<dbReference type="FunFam" id="3.40.50.300:FF:000429">
    <property type="entry name" value="Preprotein translocase subunit SecA"/>
    <property type="match status" value="1"/>
</dbReference>
<dbReference type="Gene3D" id="1.10.3060.10">
    <property type="entry name" value="Helical scaffold and wing domains of SecA"/>
    <property type="match status" value="1"/>
</dbReference>
<dbReference type="Gene3D" id="3.40.50.300">
    <property type="entry name" value="P-loop containing nucleotide triphosphate hydrolases"/>
    <property type="match status" value="3"/>
</dbReference>
<dbReference type="Gene3D" id="3.90.1440.10">
    <property type="entry name" value="SecA, preprotein cross-linking domain"/>
    <property type="match status" value="1"/>
</dbReference>
<dbReference type="HAMAP" id="MF_01382">
    <property type="entry name" value="SecA"/>
    <property type="match status" value="1"/>
</dbReference>
<dbReference type="InterPro" id="IPR014001">
    <property type="entry name" value="Helicase_ATP-bd"/>
</dbReference>
<dbReference type="InterPro" id="IPR001650">
    <property type="entry name" value="Helicase_C-like"/>
</dbReference>
<dbReference type="InterPro" id="IPR027417">
    <property type="entry name" value="P-loop_NTPase"/>
</dbReference>
<dbReference type="InterPro" id="IPR000185">
    <property type="entry name" value="SecA"/>
</dbReference>
<dbReference type="InterPro" id="IPR020937">
    <property type="entry name" value="SecA_CS"/>
</dbReference>
<dbReference type="InterPro" id="IPR011115">
    <property type="entry name" value="SecA_DEAD"/>
</dbReference>
<dbReference type="InterPro" id="IPR014018">
    <property type="entry name" value="SecA_motor_DEAD"/>
</dbReference>
<dbReference type="InterPro" id="IPR011130">
    <property type="entry name" value="SecA_preprotein_X-link_dom"/>
</dbReference>
<dbReference type="InterPro" id="IPR044722">
    <property type="entry name" value="SecA_SF2_C"/>
</dbReference>
<dbReference type="InterPro" id="IPR011116">
    <property type="entry name" value="SecA_Wing/Scaffold"/>
</dbReference>
<dbReference type="InterPro" id="IPR036266">
    <property type="entry name" value="SecA_Wing/Scaffold_sf"/>
</dbReference>
<dbReference type="InterPro" id="IPR036670">
    <property type="entry name" value="SecA_X-link_sf"/>
</dbReference>
<dbReference type="PANTHER" id="PTHR30612:SF0">
    <property type="entry name" value="CHLOROPLAST PROTEIN-TRANSPORTING ATPASE"/>
    <property type="match status" value="1"/>
</dbReference>
<dbReference type="PANTHER" id="PTHR30612">
    <property type="entry name" value="SECA INNER MEMBRANE COMPONENT OF SEC PROTEIN SECRETION SYSTEM"/>
    <property type="match status" value="1"/>
</dbReference>
<dbReference type="Pfam" id="PF21090">
    <property type="entry name" value="P-loop_SecA"/>
    <property type="match status" value="2"/>
</dbReference>
<dbReference type="Pfam" id="PF07517">
    <property type="entry name" value="SecA_DEAD"/>
    <property type="match status" value="1"/>
</dbReference>
<dbReference type="Pfam" id="PF01043">
    <property type="entry name" value="SecA_PP_bind"/>
    <property type="match status" value="1"/>
</dbReference>
<dbReference type="Pfam" id="PF07516">
    <property type="entry name" value="SecA_SW"/>
    <property type="match status" value="1"/>
</dbReference>
<dbReference type="PRINTS" id="PR00906">
    <property type="entry name" value="SECA"/>
</dbReference>
<dbReference type="SMART" id="SM00957">
    <property type="entry name" value="SecA_DEAD"/>
    <property type="match status" value="1"/>
</dbReference>
<dbReference type="SMART" id="SM00958">
    <property type="entry name" value="SecA_PP_bind"/>
    <property type="match status" value="1"/>
</dbReference>
<dbReference type="SUPFAM" id="SSF81886">
    <property type="entry name" value="Helical scaffold and wing domains of SecA"/>
    <property type="match status" value="1"/>
</dbReference>
<dbReference type="SUPFAM" id="SSF52540">
    <property type="entry name" value="P-loop containing nucleoside triphosphate hydrolases"/>
    <property type="match status" value="2"/>
</dbReference>
<dbReference type="SUPFAM" id="SSF81767">
    <property type="entry name" value="Pre-protein crosslinking domain of SecA"/>
    <property type="match status" value="1"/>
</dbReference>
<dbReference type="PROSITE" id="PS01312">
    <property type="entry name" value="SECA"/>
    <property type="match status" value="1"/>
</dbReference>
<dbReference type="PROSITE" id="PS51196">
    <property type="entry name" value="SECA_MOTOR_DEAD"/>
    <property type="match status" value="1"/>
</dbReference>
<sequence>MKLFDKNERVIKKYWKKVNKINKINLESKNLTELINSLKTIKENITPENIDEYIPEVFAIVREVSKRVIGLRPFDVQLIGAMVLHEGKVAEMKTGEGKTLVATMPVVLNALLGKGVHLVTVNDYLAKRDAMWMGPIYLALGLRVGVINTQNKSYEVIWKNEELAKKALNENLSVWPQGFNGEFLEDEAKNKEALEAYQVELKEISRKEAYECDITYGTNTEFGFDYLRDNLVIDLEDRVQRGHFYAIVDEVDSILIDEARTPLIISGPSKTKASDYIRFNQIAKKLVKDKHFTIDEQKKSVILTDEGIEYIEKLLNIENLYDPEHVNKMYFLLNALKAHYLFKKDVDYIIHNGEIVIVDEFTGRLLPGRRYSGGLHQAIEAKEGVKIKEESVTYATITYQNYFRMYEKLSGMTGTAKTEEEEFKQIYGMEVVVIPTHKPMIRIDRDDLIYRTEDEKFEAVVKEIKKRYEKGQPVLVGTTSIEKSERLSKMLSKEKIPHNVLNAKHHEKEAQIVALAGQKGSVTIATNMAGRGTDIKLGPGVKELGGLLIIGTERHESRRIDNQLRGRAGRQGDPGESIFFLSLEDDIIRIFGGEKLEKIMNLVKIEKGEPIYHPMLTKLIERVQKKVESINFGIRKNLLQMDTVLDTQRRAIYSYREYLLSGNIDEHFNDAIDDFIERRLEEFCEKGVCNVEEIKESLKILNISLDKLPDTRNELKEYLKNLLMEKFENKKKELGEDFPKIGKFIALRVIDENWRQYLEEVEHVKEAVSLRAYGQKDPILEFKKETFRMFDEMMAKIFEQTIIYTLNIRKITDEAEKESENELKKINTQHDEFTLVNRKERRVAEKKGKKKLKVKR</sequence>
<name>SECA_THEAB</name>